<accession>B7ICR2</accession>
<comment type="function">
    <text evidence="1">DNA-dependent RNA polymerase catalyzes the transcription of DNA into RNA using the four ribonucleoside triphosphates as substrates.</text>
</comment>
<comment type="catalytic activity">
    <reaction evidence="1">
        <text>RNA(n) + a ribonucleoside 5'-triphosphate = RNA(n+1) + diphosphate</text>
        <dbReference type="Rhea" id="RHEA:21248"/>
        <dbReference type="Rhea" id="RHEA-COMP:14527"/>
        <dbReference type="Rhea" id="RHEA-COMP:17342"/>
        <dbReference type="ChEBI" id="CHEBI:33019"/>
        <dbReference type="ChEBI" id="CHEBI:61557"/>
        <dbReference type="ChEBI" id="CHEBI:140395"/>
        <dbReference type="EC" id="2.7.7.6"/>
    </reaction>
</comment>
<comment type="cofactor">
    <cofactor evidence="1">
        <name>Mg(2+)</name>
        <dbReference type="ChEBI" id="CHEBI:18420"/>
    </cofactor>
    <text evidence="1">Binds 1 Mg(2+) ion per subunit.</text>
</comment>
<comment type="cofactor">
    <cofactor evidence="1">
        <name>Zn(2+)</name>
        <dbReference type="ChEBI" id="CHEBI:29105"/>
    </cofactor>
    <text evidence="1">Binds 2 Zn(2+) ions per subunit.</text>
</comment>
<comment type="subunit">
    <text evidence="1">The RNAP catalytic core consists of 2 alpha, 1 beta, 1 beta' and 1 omega subunit. When a sigma factor is associated with the core the holoenzyme is formed, which can initiate transcription.</text>
</comment>
<comment type="similarity">
    <text evidence="1">Belongs to the RNA polymerase beta' chain family.</text>
</comment>
<evidence type="ECO:0000255" key="1">
    <source>
        <dbReference type="HAMAP-Rule" id="MF_01322"/>
    </source>
</evidence>
<name>RPOC_THEAB</name>
<sequence length="1649" mass="184820">MGSTFKREIAKVTVKVASPEVIRSWSSGEVKKPETINYRTFKPEKDGLFCEKIFGPTKDYECACGKYKGKKYEGTVCERCGVRVESKEARRRRMGHIDLVAPVVHVWYLKSSPSILSSLLGIPAKELENVVYYGGKRIIEKILIVTDPKNTDFIKGSQLYQTEYEIYSQKLDFEVVPGVIIKSPSTPVTSSISGEVKIRHEKTHTDREITWVDVRKISRAEHRLYTGMILNVKNGDKVNQGDEIVSEMQIDPIYAPFDGTVEIDEISESITVRPLSTSKDIPVTFSLPYGVKPTVSNGAKVKKGDQLTNGTVLPAVVASVSGTISFGKDLNVRPREDGKYEVLKNGTLFVENVVEEKHYPLFEGALIYVEDGQEINEGDVIADRFLFEDEYLTIDEFKIFEEHYPAMFTAESEVENDRPIVVITKIDDEVSVETGLKIGDIITDDQYWAYRVLYGEKIEADSGAAAIKKLLQNLDLEKLKAEIEAELKKVSKSSGRAKKLLRRLKIVKDLLKSETKPEWMVLEAIPVVPPDIRPMIQVEGGRFATTDLNDLYRRVINRNNRLKKLYEMNSPEIIIKNEKRMLQEAVDSLIYNGRMGKAVTDRNGRPLKSLTDLLKGKKGRFRRNLLGKRVDYSGRAVIVVGPHLKIHECGLPKKMAMELFKPFVLAELLNKDDETSKTARKMKKAIIEKELPQAYEVLEEIIKGHPVLLNRAPTLHRMSLQAFEPRLIEGNAIQLHPLVCPPFNADFDGDQMAVHVPLSAAAQAEAKFLMLSRYNIISPAHGKPISMPGKDIVAGVYYLTMVDKNFDSVKEKDIKWKFSSIEEAGLAYEFGYIKLHDPILVKVDDKVIKTTYGRLIFASIVPDEFKDYNKTYGKGAIKDLVYNTFKKYGVDRTADLLDDIKDLGFHYATISGLTVSITDFYISPEREKIIEQAKAKVSEIEELFAEGFLSDEERYRETIKIWADATEKVQDATFEYIGKDPFNPIYIMVDSGARGNKDQLKQLAGMRGLMADPSGRTIEIPIISNFREGLSVLEFFISTHGARKGSADTALRTSSAGYLTRRLVDVAQSVVVTTTDCGTHNGVRATVLKSSDGLTVEKLEDFLFGRVLAKDVFDPKTNNVLVNPETGKQYTRDTIIDDDDAKFLGNYSVRIPVVTEGEIDLSSPELPESYCELAEDFVYNDVHYEVGTEVNWDVVRKATSAGLSKLKVKIYPVVGKVSVETVLSSKDSKQLVVDEELIEVTTAKILEENNVESVQVRPEIIVRSVLTCEAEHGVCSKCYGMDLSNHQIVGVGESVGVVAAQSIGEPGTQLTMRTFHTGGIATTADITQGLPRAEELFEARKKLKEPEGVFSRVKGYVKDIVEDETGRKKVYIEDEAGDIHEYEIPIKVKVAVNKGQKVLPGQSLSTGAIRPRKILETLDVDATALYLLKEIKKVYVEQGVDIHDKHFEIIIKQMLDKVEVVDPGDTDYLPGDLVRLETVKRINKEILESNVQVDSNRKRVIGKELHHHLIAEDENGQIVEIAKEGEEVTEEILEKAIKLGIKDLVVKNGEGEIVTYQILPKEPIKYRRRLLRITKASLERVGWLSAASFQQTPQVLTEAAIEGAEDLLLGLKENVIVGQLIPAGTGLDMFANIQIEETPRFAQEKEKMA</sequence>
<protein>
    <recommendedName>
        <fullName evidence="1">DNA-directed RNA polymerase subunit beta'</fullName>
        <shortName evidence="1">RNAP subunit beta'</shortName>
        <ecNumber evidence="1">2.7.7.6</ecNumber>
    </recommendedName>
    <alternativeName>
        <fullName evidence="1">RNA polymerase subunit beta'</fullName>
    </alternativeName>
    <alternativeName>
        <fullName evidence="1">Transcriptase subunit beta'</fullName>
    </alternativeName>
</protein>
<proteinExistence type="inferred from homology"/>
<keyword id="KW-0240">DNA-directed RNA polymerase</keyword>
<keyword id="KW-0460">Magnesium</keyword>
<keyword id="KW-0479">Metal-binding</keyword>
<keyword id="KW-0548">Nucleotidyltransferase</keyword>
<keyword id="KW-1185">Reference proteome</keyword>
<keyword id="KW-0804">Transcription</keyword>
<keyword id="KW-0808">Transferase</keyword>
<keyword id="KW-0862">Zinc</keyword>
<dbReference type="EC" id="2.7.7.6" evidence="1"/>
<dbReference type="EMBL" id="CP001185">
    <property type="protein sequence ID" value="ACJ75789.1"/>
    <property type="molecule type" value="Genomic_DNA"/>
</dbReference>
<dbReference type="SMR" id="B7ICR2"/>
<dbReference type="STRING" id="484019.THA_1344"/>
<dbReference type="KEGG" id="taf:THA_1344"/>
<dbReference type="eggNOG" id="COG0086">
    <property type="taxonomic scope" value="Bacteria"/>
</dbReference>
<dbReference type="HOGENOM" id="CLU_000524_3_1_0"/>
<dbReference type="Proteomes" id="UP000002453">
    <property type="component" value="Chromosome"/>
</dbReference>
<dbReference type="GO" id="GO:0000428">
    <property type="term" value="C:DNA-directed RNA polymerase complex"/>
    <property type="evidence" value="ECO:0007669"/>
    <property type="project" value="UniProtKB-KW"/>
</dbReference>
<dbReference type="GO" id="GO:0003677">
    <property type="term" value="F:DNA binding"/>
    <property type="evidence" value="ECO:0007669"/>
    <property type="project" value="UniProtKB-UniRule"/>
</dbReference>
<dbReference type="GO" id="GO:0003899">
    <property type="term" value="F:DNA-directed RNA polymerase activity"/>
    <property type="evidence" value="ECO:0007669"/>
    <property type="project" value="UniProtKB-UniRule"/>
</dbReference>
<dbReference type="GO" id="GO:0000287">
    <property type="term" value="F:magnesium ion binding"/>
    <property type="evidence" value="ECO:0007669"/>
    <property type="project" value="UniProtKB-UniRule"/>
</dbReference>
<dbReference type="GO" id="GO:0008270">
    <property type="term" value="F:zinc ion binding"/>
    <property type="evidence" value="ECO:0007669"/>
    <property type="project" value="UniProtKB-UniRule"/>
</dbReference>
<dbReference type="GO" id="GO:0006351">
    <property type="term" value="P:DNA-templated transcription"/>
    <property type="evidence" value="ECO:0007669"/>
    <property type="project" value="UniProtKB-UniRule"/>
</dbReference>
<dbReference type="CDD" id="cd02655">
    <property type="entry name" value="RNAP_beta'_C"/>
    <property type="match status" value="1"/>
</dbReference>
<dbReference type="CDD" id="cd01609">
    <property type="entry name" value="RNAP_beta'_N"/>
    <property type="match status" value="1"/>
</dbReference>
<dbReference type="Gene3D" id="1.10.132.30">
    <property type="match status" value="1"/>
</dbReference>
<dbReference type="Gene3D" id="1.10.150.390">
    <property type="match status" value="1"/>
</dbReference>
<dbReference type="Gene3D" id="1.10.1790.20">
    <property type="match status" value="1"/>
</dbReference>
<dbReference type="Gene3D" id="1.10.40.90">
    <property type="match status" value="1"/>
</dbReference>
<dbReference type="Gene3D" id="2.40.40.20">
    <property type="match status" value="1"/>
</dbReference>
<dbReference type="Gene3D" id="2.40.50.100">
    <property type="match status" value="4"/>
</dbReference>
<dbReference type="Gene3D" id="4.10.860.120">
    <property type="entry name" value="RNA polymerase II, clamp domain"/>
    <property type="match status" value="1"/>
</dbReference>
<dbReference type="Gene3D" id="1.10.274.100">
    <property type="entry name" value="RNA polymerase Rpb1, domain 3"/>
    <property type="match status" value="2"/>
</dbReference>
<dbReference type="HAMAP" id="MF_01322">
    <property type="entry name" value="RNApol_bact_RpoC"/>
    <property type="match status" value="1"/>
</dbReference>
<dbReference type="InterPro" id="IPR045867">
    <property type="entry name" value="DNA-dir_RpoC_beta_prime"/>
</dbReference>
<dbReference type="InterPro" id="IPR012754">
    <property type="entry name" value="DNA-dir_RpoC_beta_prime_bact"/>
</dbReference>
<dbReference type="InterPro" id="IPR000722">
    <property type="entry name" value="RNA_pol_asu"/>
</dbReference>
<dbReference type="InterPro" id="IPR006592">
    <property type="entry name" value="RNA_pol_N"/>
</dbReference>
<dbReference type="InterPro" id="IPR007080">
    <property type="entry name" value="RNA_pol_Rpb1_1"/>
</dbReference>
<dbReference type="InterPro" id="IPR007066">
    <property type="entry name" value="RNA_pol_Rpb1_3"/>
</dbReference>
<dbReference type="InterPro" id="IPR042102">
    <property type="entry name" value="RNA_pol_Rpb1_3_sf"/>
</dbReference>
<dbReference type="InterPro" id="IPR007083">
    <property type="entry name" value="RNA_pol_Rpb1_4"/>
</dbReference>
<dbReference type="InterPro" id="IPR007081">
    <property type="entry name" value="RNA_pol_Rpb1_5"/>
</dbReference>
<dbReference type="InterPro" id="IPR044893">
    <property type="entry name" value="RNA_pol_Rpb1_clamp_domain"/>
</dbReference>
<dbReference type="InterPro" id="IPR038120">
    <property type="entry name" value="Rpb1_funnel_sf"/>
</dbReference>
<dbReference type="PANTHER" id="PTHR19376">
    <property type="entry name" value="DNA-DIRECTED RNA POLYMERASE"/>
    <property type="match status" value="1"/>
</dbReference>
<dbReference type="PANTHER" id="PTHR19376:SF54">
    <property type="entry name" value="DNA-DIRECTED RNA POLYMERASE SUBUNIT BETA"/>
    <property type="match status" value="1"/>
</dbReference>
<dbReference type="Pfam" id="PF04997">
    <property type="entry name" value="RNA_pol_Rpb1_1"/>
    <property type="match status" value="2"/>
</dbReference>
<dbReference type="Pfam" id="PF00623">
    <property type="entry name" value="RNA_pol_Rpb1_2"/>
    <property type="match status" value="2"/>
</dbReference>
<dbReference type="Pfam" id="PF04983">
    <property type="entry name" value="RNA_pol_Rpb1_3"/>
    <property type="match status" value="1"/>
</dbReference>
<dbReference type="Pfam" id="PF05000">
    <property type="entry name" value="RNA_pol_Rpb1_4"/>
    <property type="match status" value="1"/>
</dbReference>
<dbReference type="Pfam" id="PF04998">
    <property type="entry name" value="RNA_pol_Rpb1_5"/>
    <property type="match status" value="1"/>
</dbReference>
<dbReference type="SMART" id="SM00663">
    <property type="entry name" value="RPOLA_N"/>
    <property type="match status" value="1"/>
</dbReference>
<dbReference type="SUPFAM" id="SSF64484">
    <property type="entry name" value="beta and beta-prime subunits of DNA dependent RNA-polymerase"/>
    <property type="match status" value="1"/>
</dbReference>
<gene>
    <name evidence="1" type="primary">rpoC</name>
    <name type="ordered locus">THA_1344</name>
</gene>
<reference key="1">
    <citation type="journal article" date="2009" name="J. Bacteriol.">
        <title>The genome of Thermosipho africanus TCF52B: lateral genetic connections to the Firmicutes and Archaea.</title>
        <authorList>
            <person name="Nesboe C.L."/>
            <person name="Bapteste E."/>
            <person name="Curtis B."/>
            <person name="Dahle H."/>
            <person name="Lopez P."/>
            <person name="Macleod D."/>
            <person name="Dlutek M."/>
            <person name="Bowman S."/>
            <person name="Zhaxybayeva O."/>
            <person name="Birkeland N.-K."/>
            <person name="Doolittle W.F."/>
        </authorList>
    </citation>
    <scope>NUCLEOTIDE SEQUENCE [LARGE SCALE GENOMIC DNA]</scope>
    <source>
        <strain>TCF52B</strain>
    </source>
</reference>
<organism>
    <name type="scientific">Thermosipho africanus (strain TCF52B)</name>
    <dbReference type="NCBI Taxonomy" id="484019"/>
    <lineage>
        <taxon>Bacteria</taxon>
        <taxon>Thermotogati</taxon>
        <taxon>Thermotogota</taxon>
        <taxon>Thermotogae</taxon>
        <taxon>Thermotogales</taxon>
        <taxon>Fervidobacteriaceae</taxon>
        <taxon>Thermosipho</taxon>
    </lineage>
</organism>
<feature type="chain" id="PRO_1000165856" description="DNA-directed RNA polymerase subunit beta'">
    <location>
        <begin position="1"/>
        <end position="1649"/>
    </location>
</feature>
<feature type="binding site" evidence="1">
    <location>
        <position position="62"/>
    </location>
    <ligand>
        <name>Zn(2+)</name>
        <dbReference type="ChEBI" id="CHEBI:29105"/>
        <label>1</label>
    </ligand>
</feature>
<feature type="binding site" evidence="1">
    <location>
        <position position="64"/>
    </location>
    <ligand>
        <name>Zn(2+)</name>
        <dbReference type="ChEBI" id="CHEBI:29105"/>
        <label>1</label>
    </ligand>
</feature>
<feature type="binding site" evidence="1">
    <location>
        <position position="77"/>
    </location>
    <ligand>
        <name>Zn(2+)</name>
        <dbReference type="ChEBI" id="CHEBI:29105"/>
        <label>1</label>
    </ligand>
</feature>
<feature type="binding site" evidence="1">
    <location>
        <position position="80"/>
    </location>
    <ligand>
        <name>Zn(2+)</name>
        <dbReference type="ChEBI" id="CHEBI:29105"/>
        <label>1</label>
    </ligand>
</feature>
<feature type="binding site" evidence="1">
    <location>
        <position position="746"/>
    </location>
    <ligand>
        <name>Mg(2+)</name>
        <dbReference type="ChEBI" id="CHEBI:18420"/>
    </ligand>
</feature>
<feature type="binding site" evidence="1">
    <location>
        <position position="748"/>
    </location>
    <ligand>
        <name>Mg(2+)</name>
        <dbReference type="ChEBI" id="CHEBI:18420"/>
    </ligand>
</feature>
<feature type="binding site" evidence="1">
    <location>
        <position position="750"/>
    </location>
    <ligand>
        <name>Mg(2+)</name>
        <dbReference type="ChEBI" id="CHEBI:18420"/>
    </ligand>
</feature>
<feature type="binding site" evidence="1">
    <location>
        <position position="1077"/>
    </location>
    <ligand>
        <name>Zn(2+)</name>
        <dbReference type="ChEBI" id="CHEBI:29105"/>
        <label>2</label>
    </ligand>
</feature>
<feature type="binding site" evidence="1">
    <location>
        <position position="1268"/>
    </location>
    <ligand>
        <name>Zn(2+)</name>
        <dbReference type="ChEBI" id="CHEBI:29105"/>
        <label>2</label>
    </ligand>
</feature>
<feature type="binding site" evidence="1">
    <location>
        <position position="1275"/>
    </location>
    <ligand>
        <name>Zn(2+)</name>
        <dbReference type="ChEBI" id="CHEBI:29105"/>
        <label>2</label>
    </ligand>
</feature>
<feature type="binding site" evidence="1">
    <location>
        <position position="1278"/>
    </location>
    <ligand>
        <name>Zn(2+)</name>
        <dbReference type="ChEBI" id="CHEBI:29105"/>
        <label>2</label>
    </ligand>
</feature>